<sequence>MTEHNVRNFNINFGPQHPAAHGVLRLVLELDGEIVERVDPHIGLLHRGTEKLIETKTYLQAVPYFDRLDYVAPMNQEHAYALAVEKLLGIQIPIRGQLIRVLYSEIGRILSHLLNVTTQAMDVGALTPPLWGFEEREKLMVFYERASGSRMHAAYFRPGGVHQDLPEKLVQDIGDWCDPFLKALDDIDDLLTGNRIFKQRNVDIGVVSLEDCWAWGFSGVMVRGSGAAWDLRRAQPYECYSDLEFDIPIGKNGDNYDRYLIRMIEMRQSVRIMKQCVNRLLSDARTGPFSSIDGKVVPPKRGEMKRSMEALIHHFKLYTEGYHVPAGEVYTAVEAPKGEFGVYLVSDGSNKPYRCKIRAPGYAHLQAMDFMCRGHQLADVAAVLGSLDIVFGEVDR</sequence>
<reference key="1">
    <citation type="journal article" date="2006" name="Proc. Natl. Acad. Sci. U.S.A.">
        <title>The partitioned Rhizobium etli genome: genetic and metabolic redundancy in seven interacting replicons.</title>
        <authorList>
            <person name="Gonzalez V."/>
            <person name="Santamaria R.I."/>
            <person name="Bustos P."/>
            <person name="Hernandez-Gonzalez I."/>
            <person name="Medrano-Soto A."/>
            <person name="Moreno-Hagelsieb G."/>
            <person name="Janga S.C."/>
            <person name="Ramirez M.A."/>
            <person name="Jimenez-Jacinto V."/>
            <person name="Collado-Vides J."/>
            <person name="Davila G."/>
        </authorList>
    </citation>
    <scope>NUCLEOTIDE SEQUENCE [LARGE SCALE GENOMIC DNA]</scope>
    <source>
        <strain>ATCC 51251 / DSM 11541 / JCM 21823 / NBRC 15573 / CFN 42</strain>
    </source>
</reference>
<proteinExistence type="inferred from homology"/>
<organism>
    <name type="scientific">Rhizobium etli (strain ATCC 51251 / DSM 11541 / JCM 21823 / NBRC 15573 / CFN 42)</name>
    <dbReference type="NCBI Taxonomy" id="347834"/>
    <lineage>
        <taxon>Bacteria</taxon>
        <taxon>Pseudomonadati</taxon>
        <taxon>Pseudomonadota</taxon>
        <taxon>Alphaproteobacteria</taxon>
        <taxon>Hyphomicrobiales</taxon>
        <taxon>Rhizobiaceae</taxon>
        <taxon>Rhizobium/Agrobacterium group</taxon>
        <taxon>Rhizobium</taxon>
    </lineage>
</organism>
<keyword id="KW-0997">Cell inner membrane</keyword>
<keyword id="KW-1003">Cell membrane</keyword>
<keyword id="KW-0472">Membrane</keyword>
<keyword id="KW-0520">NAD</keyword>
<keyword id="KW-0874">Quinone</keyword>
<keyword id="KW-1185">Reference proteome</keyword>
<keyword id="KW-1278">Translocase</keyword>
<keyword id="KW-0813">Transport</keyword>
<keyword id="KW-0830">Ubiquinone</keyword>
<accession>Q2K9T1</accession>
<dbReference type="EC" id="7.1.1.-" evidence="1"/>
<dbReference type="EMBL" id="CP000133">
    <property type="protein sequence ID" value="ABC90405.1"/>
    <property type="molecule type" value="Genomic_DNA"/>
</dbReference>
<dbReference type="RefSeq" id="WP_011424925.1">
    <property type="nucleotide sequence ID" value="NC_007761.1"/>
</dbReference>
<dbReference type="SMR" id="Q2K9T1"/>
<dbReference type="KEGG" id="ret:RHE_CH01606"/>
<dbReference type="eggNOG" id="COG0649">
    <property type="taxonomic scope" value="Bacteria"/>
</dbReference>
<dbReference type="HOGENOM" id="CLU_015134_1_1_5"/>
<dbReference type="OrthoDB" id="9801496at2"/>
<dbReference type="Proteomes" id="UP000001936">
    <property type="component" value="Chromosome"/>
</dbReference>
<dbReference type="GO" id="GO:0005886">
    <property type="term" value="C:plasma membrane"/>
    <property type="evidence" value="ECO:0007669"/>
    <property type="project" value="UniProtKB-SubCell"/>
</dbReference>
<dbReference type="GO" id="GO:0051287">
    <property type="term" value="F:NAD binding"/>
    <property type="evidence" value="ECO:0007669"/>
    <property type="project" value="InterPro"/>
</dbReference>
<dbReference type="GO" id="GO:0050136">
    <property type="term" value="F:NADH:ubiquinone reductase (non-electrogenic) activity"/>
    <property type="evidence" value="ECO:0007669"/>
    <property type="project" value="UniProtKB-UniRule"/>
</dbReference>
<dbReference type="GO" id="GO:0048038">
    <property type="term" value="F:quinone binding"/>
    <property type="evidence" value="ECO:0007669"/>
    <property type="project" value="UniProtKB-KW"/>
</dbReference>
<dbReference type="FunFam" id="1.10.645.10:FF:000005">
    <property type="entry name" value="NADH-quinone oxidoreductase subunit D"/>
    <property type="match status" value="1"/>
</dbReference>
<dbReference type="Gene3D" id="1.10.645.10">
    <property type="entry name" value="Cytochrome-c3 Hydrogenase, chain B"/>
    <property type="match status" value="1"/>
</dbReference>
<dbReference type="HAMAP" id="MF_01358">
    <property type="entry name" value="NDH1_NuoD"/>
    <property type="match status" value="1"/>
</dbReference>
<dbReference type="InterPro" id="IPR001135">
    <property type="entry name" value="NADH_Q_OxRdtase_suD"/>
</dbReference>
<dbReference type="InterPro" id="IPR014029">
    <property type="entry name" value="NADH_UbQ_OxRdtase_49kDa_CS"/>
</dbReference>
<dbReference type="InterPro" id="IPR022885">
    <property type="entry name" value="NDH1_su_D/H"/>
</dbReference>
<dbReference type="InterPro" id="IPR029014">
    <property type="entry name" value="NiFe-Hase_large"/>
</dbReference>
<dbReference type="NCBIfam" id="TIGR01962">
    <property type="entry name" value="NuoD"/>
    <property type="match status" value="1"/>
</dbReference>
<dbReference type="NCBIfam" id="NF004739">
    <property type="entry name" value="PRK06075.1"/>
    <property type="match status" value="1"/>
</dbReference>
<dbReference type="PANTHER" id="PTHR11993:SF10">
    <property type="entry name" value="NADH DEHYDROGENASE [UBIQUINONE] IRON-SULFUR PROTEIN 2, MITOCHONDRIAL"/>
    <property type="match status" value="1"/>
</dbReference>
<dbReference type="PANTHER" id="PTHR11993">
    <property type="entry name" value="NADH-UBIQUINONE OXIDOREDUCTASE 49 KDA SUBUNIT"/>
    <property type="match status" value="1"/>
</dbReference>
<dbReference type="Pfam" id="PF00346">
    <property type="entry name" value="Complex1_49kDa"/>
    <property type="match status" value="1"/>
</dbReference>
<dbReference type="SUPFAM" id="SSF56762">
    <property type="entry name" value="HydB/Nqo4-like"/>
    <property type="match status" value="1"/>
</dbReference>
<dbReference type="PROSITE" id="PS00535">
    <property type="entry name" value="COMPLEX1_49K"/>
    <property type="match status" value="1"/>
</dbReference>
<evidence type="ECO:0000255" key="1">
    <source>
        <dbReference type="HAMAP-Rule" id="MF_01358"/>
    </source>
</evidence>
<comment type="function">
    <text evidence="1">NDH-1 shuttles electrons from NADH, via FMN and iron-sulfur (Fe-S) centers, to quinones in the respiratory chain. The immediate electron acceptor for the enzyme in this species is believed to be ubiquinone. Couples the redox reaction to proton translocation (for every two electrons transferred, four hydrogen ions are translocated across the cytoplasmic membrane), and thus conserves the redox energy in a proton gradient.</text>
</comment>
<comment type="catalytic activity">
    <reaction evidence="1">
        <text>a quinone + NADH + 5 H(+)(in) = a quinol + NAD(+) + 4 H(+)(out)</text>
        <dbReference type="Rhea" id="RHEA:57888"/>
        <dbReference type="ChEBI" id="CHEBI:15378"/>
        <dbReference type="ChEBI" id="CHEBI:24646"/>
        <dbReference type="ChEBI" id="CHEBI:57540"/>
        <dbReference type="ChEBI" id="CHEBI:57945"/>
        <dbReference type="ChEBI" id="CHEBI:132124"/>
    </reaction>
</comment>
<comment type="subunit">
    <text evidence="1">NDH-1 is composed of 14 different subunits. Subunits NuoB, C, D, E, F, and G constitute the peripheral sector of the complex.</text>
</comment>
<comment type="subcellular location">
    <subcellularLocation>
        <location evidence="1">Cell inner membrane</location>
        <topology evidence="1">Peripheral membrane protein</topology>
        <orientation evidence="1">Cytoplasmic side</orientation>
    </subcellularLocation>
</comment>
<comment type="similarity">
    <text evidence="1">Belongs to the complex I 49 kDa subunit family.</text>
</comment>
<feature type="chain" id="PRO_0000357892" description="NADH-quinone oxidoreductase subunit D 1">
    <location>
        <begin position="1"/>
        <end position="396"/>
    </location>
</feature>
<protein>
    <recommendedName>
        <fullName evidence="1">NADH-quinone oxidoreductase subunit D 1</fullName>
        <ecNumber evidence="1">7.1.1.-</ecNumber>
    </recommendedName>
    <alternativeName>
        <fullName evidence="1">NADH dehydrogenase I subunit D 1</fullName>
    </alternativeName>
    <alternativeName>
        <fullName evidence="1">NDH-1 subunit D 1</fullName>
    </alternativeName>
</protein>
<gene>
    <name evidence="1" type="primary">nuoD1</name>
    <name type="ordered locus">RHE_CH01606</name>
</gene>
<name>NUOD1_RHIEC</name>